<sequence length="83" mass="9273">MADNTVTDVKKLSFERAIEELESIVKRLEDGKVPLEESVAIYERGEALKRRCEELLRQAEARVEKITTDASGRATGVAPLDVQ</sequence>
<keyword id="KW-0963">Cytoplasm</keyword>
<keyword id="KW-0269">Exonuclease</keyword>
<keyword id="KW-0378">Hydrolase</keyword>
<keyword id="KW-0540">Nuclease</keyword>
<keyword id="KW-1185">Reference proteome</keyword>
<name>EX7S_BRASB</name>
<reference key="1">
    <citation type="journal article" date="2007" name="Science">
        <title>Legumes symbioses: absence of nod genes in photosynthetic bradyrhizobia.</title>
        <authorList>
            <person name="Giraud E."/>
            <person name="Moulin L."/>
            <person name="Vallenet D."/>
            <person name="Barbe V."/>
            <person name="Cytryn E."/>
            <person name="Avarre J.-C."/>
            <person name="Jaubert M."/>
            <person name="Simon D."/>
            <person name="Cartieaux F."/>
            <person name="Prin Y."/>
            <person name="Bena G."/>
            <person name="Hannibal L."/>
            <person name="Fardoux J."/>
            <person name="Kojadinovic M."/>
            <person name="Vuillet L."/>
            <person name="Lajus A."/>
            <person name="Cruveiller S."/>
            <person name="Rouy Z."/>
            <person name="Mangenot S."/>
            <person name="Segurens B."/>
            <person name="Dossat C."/>
            <person name="Franck W.L."/>
            <person name="Chang W.-S."/>
            <person name="Saunders E."/>
            <person name="Bruce D."/>
            <person name="Richardson P."/>
            <person name="Normand P."/>
            <person name="Dreyfus B."/>
            <person name="Pignol D."/>
            <person name="Stacey G."/>
            <person name="Emerich D."/>
            <person name="Vermeglio A."/>
            <person name="Medigue C."/>
            <person name="Sadowsky M."/>
        </authorList>
    </citation>
    <scope>NUCLEOTIDE SEQUENCE [LARGE SCALE GENOMIC DNA]</scope>
    <source>
        <strain>BTAi1 / ATCC BAA-1182</strain>
    </source>
</reference>
<proteinExistence type="inferred from homology"/>
<evidence type="ECO:0000255" key="1">
    <source>
        <dbReference type="HAMAP-Rule" id="MF_00337"/>
    </source>
</evidence>
<organism>
    <name type="scientific">Bradyrhizobium sp. (strain BTAi1 / ATCC BAA-1182)</name>
    <dbReference type="NCBI Taxonomy" id="288000"/>
    <lineage>
        <taxon>Bacteria</taxon>
        <taxon>Pseudomonadati</taxon>
        <taxon>Pseudomonadota</taxon>
        <taxon>Alphaproteobacteria</taxon>
        <taxon>Hyphomicrobiales</taxon>
        <taxon>Nitrobacteraceae</taxon>
        <taxon>Bradyrhizobium</taxon>
    </lineage>
</organism>
<feature type="chain" id="PRO_0000303691" description="Exodeoxyribonuclease 7 small subunit">
    <location>
        <begin position="1"/>
        <end position="83"/>
    </location>
</feature>
<dbReference type="EC" id="3.1.11.6" evidence="1"/>
<dbReference type="EMBL" id="CP000494">
    <property type="protein sequence ID" value="ABQ34645.1"/>
    <property type="molecule type" value="Genomic_DNA"/>
</dbReference>
<dbReference type="RefSeq" id="WP_012042673.1">
    <property type="nucleotide sequence ID" value="NC_009485.1"/>
</dbReference>
<dbReference type="SMR" id="A5EEQ1"/>
<dbReference type="STRING" id="288000.BBta_2480"/>
<dbReference type="KEGG" id="bbt:BBta_2480"/>
<dbReference type="eggNOG" id="COG1722">
    <property type="taxonomic scope" value="Bacteria"/>
</dbReference>
<dbReference type="HOGENOM" id="CLU_145918_0_3_5"/>
<dbReference type="OrthoDB" id="9808145at2"/>
<dbReference type="Proteomes" id="UP000000246">
    <property type="component" value="Chromosome"/>
</dbReference>
<dbReference type="GO" id="GO:0005829">
    <property type="term" value="C:cytosol"/>
    <property type="evidence" value="ECO:0007669"/>
    <property type="project" value="TreeGrafter"/>
</dbReference>
<dbReference type="GO" id="GO:0009318">
    <property type="term" value="C:exodeoxyribonuclease VII complex"/>
    <property type="evidence" value="ECO:0007669"/>
    <property type="project" value="InterPro"/>
</dbReference>
<dbReference type="GO" id="GO:0008855">
    <property type="term" value="F:exodeoxyribonuclease VII activity"/>
    <property type="evidence" value="ECO:0007669"/>
    <property type="project" value="UniProtKB-UniRule"/>
</dbReference>
<dbReference type="GO" id="GO:0006308">
    <property type="term" value="P:DNA catabolic process"/>
    <property type="evidence" value="ECO:0007669"/>
    <property type="project" value="UniProtKB-UniRule"/>
</dbReference>
<dbReference type="FunFam" id="1.10.287.1040:FF:000004">
    <property type="entry name" value="Exodeoxyribonuclease 7 small subunit"/>
    <property type="match status" value="1"/>
</dbReference>
<dbReference type="Gene3D" id="1.10.287.1040">
    <property type="entry name" value="Exonuclease VII, small subunit"/>
    <property type="match status" value="1"/>
</dbReference>
<dbReference type="HAMAP" id="MF_00337">
    <property type="entry name" value="Exonuc_7_S"/>
    <property type="match status" value="1"/>
</dbReference>
<dbReference type="InterPro" id="IPR003761">
    <property type="entry name" value="Exonuc_VII_S"/>
</dbReference>
<dbReference type="InterPro" id="IPR037004">
    <property type="entry name" value="Exonuc_VII_ssu_sf"/>
</dbReference>
<dbReference type="NCBIfam" id="NF002139">
    <property type="entry name" value="PRK00977.1-3"/>
    <property type="match status" value="1"/>
</dbReference>
<dbReference type="NCBIfam" id="NF002140">
    <property type="entry name" value="PRK00977.1-4"/>
    <property type="match status" value="1"/>
</dbReference>
<dbReference type="NCBIfam" id="TIGR01280">
    <property type="entry name" value="xseB"/>
    <property type="match status" value="1"/>
</dbReference>
<dbReference type="PANTHER" id="PTHR34137">
    <property type="entry name" value="EXODEOXYRIBONUCLEASE 7 SMALL SUBUNIT"/>
    <property type="match status" value="1"/>
</dbReference>
<dbReference type="PANTHER" id="PTHR34137:SF1">
    <property type="entry name" value="EXODEOXYRIBONUCLEASE 7 SMALL SUBUNIT"/>
    <property type="match status" value="1"/>
</dbReference>
<dbReference type="Pfam" id="PF02609">
    <property type="entry name" value="Exonuc_VII_S"/>
    <property type="match status" value="1"/>
</dbReference>
<dbReference type="PIRSF" id="PIRSF006488">
    <property type="entry name" value="Exonuc_VII_S"/>
    <property type="match status" value="1"/>
</dbReference>
<dbReference type="SUPFAM" id="SSF116842">
    <property type="entry name" value="XseB-like"/>
    <property type="match status" value="1"/>
</dbReference>
<accession>A5EEQ1</accession>
<gene>
    <name evidence="1" type="primary">xseB</name>
    <name type="ordered locus">BBta_2480</name>
</gene>
<protein>
    <recommendedName>
        <fullName evidence="1">Exodeoxyribonuclease 7 small subunit</fullName>
        <ecNumber evidence="1">3.1.11.6</ecNumber>
    </recommendedName>
    <alternativeName>
        <fullName evidence="1">Exodeoxyribonuclease VII small subunit</fullName>
        <shortName evidence="1">Exonuclease VII small subunit</shortName>
    </alternativeName>
</protein>
<comment type="function">
    <text evidence="1">Bidirectionally degrades single-stranded DNA into large acid-insoluble oligonucleotides, which are then degraded further into small acid-soluble oligonucleotides.</text>
</comment>
<comment type="catalytic activity">
    <reaction evidence="1">
        <text>Exonucleolytic cleavage in either 5'- to 3'- or 3'- to 5'-direction to yield nucleoside 5'-phosphates.</text>
        <dbReference type="EC" id="3.1.11.6"/>
    </reaction>
</comment>
<comment type="subunit">
    <text evidence="1">Heterooligomer composed of large and small subunits.</text>
</comment>
<comment type="subcellular location">
    <subcellularLocation>
        <location evidence="1">Cytoplasm</location>
    </subcellularLocation>
</comment>
<comment type="similarity">
    <text evidence="1">Belongs to the XseB family.</text>
</comment>